<gene>
    <name evidence="3" type="primary">psbU</name>
</gene>
<sequence length="148" mass="15991">MKLAVFAVLISTVAAFVAPNGVQRAATTELNAERREFLSAAAVAAGLAFPLTANAIRDYENVGYLGGSEIVDVNNANVRVYLKMPGLYPTLAGKIASNGPYNAVGDLYNIPGLSGKEKELLKKYESRFTAQKPQADYVIDRFNNGLYR</sequence>
<reference key="1">
    <citation type="journal article" date="2004" name="J. Mol. Evol.">
        <title>Presequence acquisition during secondary endocytobiosis and the possible role of introns.</title>
        <authorList>
            <person name="Kilian O."/>
            <person name="Kroth P.G."/>
        </authorList>
    </citation>
    <scope>NUCLEOTIDE SEQUENCE [GENOMIC DNA / MRNA]</scope>
    <source>
        <strain>UTEX 646 / Bohlin</strain>
    </source>
</reference>
<feature type="transit peptide" description="Chloroplast" evidence="2">
    <location>
        <begin position="1"/>
        <end position="32"/>
    </location>
</feature>
<feature type="transit peptide" description="Thylakoid" evidence="2">
    <location>
        <begin position="33"/>
        <end position="54"/>
    </location>
</feature>
<feature type="chain" id="PRO_5000089378" description="Photosystem II extrinsic protein U, chloroplastic">
    <location>
        <begin position="55"/>
        <end position="148"/>
    </location>
</feature>
<name>PSBU_PHATR</name>
<organism>
    <name type="scientific">Phaeodactylum tricornutum</name>
    <name type="common">Diatom</name>
    <dbReference type="NCBI Taxonomy" id="2850"/>
    <lineage>
        <taxon>Eukaryota</taxon>
        <taxon>Sar</taxon>
        <taxon>Stramenopiles</taxon>
        <taxon>Ochrophyta</taxon>
        <taxon>Bacillariophyta</taxon>
        <taxon>Bacillariophyceae</taxon>
        <taxon>Bacillariophycidae</taxon>
        <taxon>Naviculales</taxon>
        <taxon>Phaeodactylaceae</taxon>
        <taxon>Phaeodactylum</taxon>
    </lineage>
</organism>
<evidence type="ECO:0000250" key="1">
    <source>
        <dbReference type="UniProtKB" id="Q9ZQS5"/>
    </source>
</evidence>
<evidence type="ECO:0000255" key="2"/>
<evidence type="ECO:0000303" key="3">
    <source>
    </source>
</evidence>
<evidence type="ECO:0000305" key="4"/>
<accession>Q84XB6</accession>
<proteinExistence type="inferred from homology"/>
<protein>
    <recommendedName>
        <fullName evidence="4">Photosystem II extrinsic protein U, chloroplastic</fullName>
        <shortName evidence="3">PsbU</shortName>
    </recommendedName>
    <alternativeName>
        <fullName evidence="3">Photosystem II 12 kDa extrinsic protein</fullName>
        <shortName>PS II complex 12 kDa extrinsic protein</shortName>
    </alternativeName>
</protein>
<dbReference type="EMBL" id="AY191865">
    <property type="protein sequence ID" value="AAO43195.1"/>
    <property type="molecule type" value="Genomic_DNA"/>
</dbReference>
<dbReference type="SMR" id="Q84XB6"/>
<dbReference type="HOGENOM" id="CLU_141240_0_0_1"/>
<dbReference type="GO" id="GO:0009535">
    <property type="term" value="C:chloroplast thylakoid membrane"/>
    <property type="evidence" value="ECO:0007669"/>
    <property type="project" value="UniProtKB-SubCell"/>
</dbReference>
<dbReference type="GO" id="GO:0019898">
    <property type="term" value="C:extrinsic component of membrane"/>
    <property type="evidence" value="ECO:0007669"/>
    <property type="project" value="InterPro"/>
</dbReference>
<dbReference type="GO" id="GO:0009523">
    <property type="term" value="C:photosystem II"/>
    <property type="evidence" value="ECO:0007669"/>
    <property type="project" value="UniProtKB-KW"/>
</dbReference>
<dbReference type="GO" id="GO:0015979">
    <property type="term" value="P:photosynthesis"/>
    <property type="evidence" value="ECO:0007669"/>
    <property type="project" value="UniProtKB-KW"/>
</dbReference>
<dbReference type="GO" id="GO:0042549">
    <property type="term" value="P:photosystem II stabilization"/>
    <property type="evidence" value="ECO:0007669"/>
    <property type="project" value="InterPro"/>
</dbReference>
<dbReference type="Gene3D" id="1.10.150.320">
    <property type="entry name" value="Photosystem II 12 kDa extrinsic protein"/>
    <property type="match status" value="1"/>
</dbReference>
<dbReference type="InterPro" id="IPR010527">
    <property type="entry name" value="PSII_PsbU"/>
</dbReference>
<dbReference type="NCBIfam" id="NF002708">
    <property type="entry name" value="PRK02515.1"/>
    <property type="match status" value="1"/>
</dbReference>
<dbReference type="Pfam" id="PF06514">
    <property type="entry name" value="PsbU"/>
    <property type="match status" value="1"/>
</dbReference>
<dbReference type="SUPFAM" id="SSF81585">
    <property type="entry name" value="PsbU/PolX domain-like"/>
    <property type="match status" value="1"/>
</dbReference>
<keyword id="KW-0150">Chloroplast</keyword>
<keyword id="KW-0249">Electron transport</keyword>
<keyword id="KW-0472">Membrane</keyword>
<keyword id="KW-0602">Photosynthesis</keyword>
<keyword id="KW-0604">Photosystem II</keyword>
<keyword id="KW-0934">Plastid</keyword>
<keyword id="KW-0793">Thylakoid</keyword>
<keyword id="KW-0809">Transit peptide</keyword>
<keyword id="KW-0813">Transport</keyword>
<comment type="function">
    <text evidence="1">One of the extrinsic, lumenal subunits of photosystem II (PSII), which stabilize and protect the oxygen-evolving complex. PSII is a light-driven water plastoquinone oxidoreductase, using light energy to abstract electrons from H(2)O, generating a proton gradient subsequently used for ATP formation. Stabilizes the structure of photosystem II oxygen-evolving complex (OEC), the ion environment of oxygen evolution and protects the OEC against heat-induced inactivation.</text>
</comment>
<comment type="subunit">
    <text evidence="1">PSII is composed of 1 copy each of membrane proteins PsbA, PsbB, PsbC, PsbD, PsbE, PsbF, PsbH, PsbI, PsbJ, PsbK, PsbL, PsbM, PsbT, PsbX, PsbY, PsbZ, Psb30/Ycf12, at least 3 peripheral proteins of the oxygen-evolving complex and a large number of cofactors. It forms dimeric complexes. The oxygen-evolving complex may be composed of PsbO, PsbQ', PsbV and PsbU.</text>
</comment>
<comment type="subcellular location">
    <subcellularLocation>
        <location evidence="1">Plastid</location>
        <location evidence="1">Chloroplast thylakoid membrane</location>
        <topology evidence="1">Peripheral membrane protein</topology>
        <orientation evidence="1">Lumenal side</orientation>
    </subcellularLocation>
</comment>
<comment type="similarity">
    <text evidence="4">Belongs to the PsbU family.</text>
</comment>